<proteinExistence type="inferred from homology"/>
<name>TX4A_POGRU</name>
<reference key="1">
    <citation type="journal article" date="2024" name="J. Biol. Chem.">
        <title>Peptide toxins that target vertebrate voltage-gated sodium channels underly the painful stings of harvester ants.</title>
        <authorList>
            <person name="Robinson S.D."/>
            <person name="Deuis J.R."/>
            <person name="Niu P."/>
            <person name="Touchard A."/>
            <person name="Mueller A."/>
            <person name="Schendel V."/>
            <person name="Brinkwirth N."/>
            <person name="King G.F."/>
            <person name="Vetter I."/>
            <person name="Schmidt J.O."/>
        </authorList>
    </citation>
    <scope>NUCLEOTIDE SEQUENCE [MRNA]</scope>
    <source>
        <tissue>Venom gland</tissue>
    </source>
</reference>
<accession>P0DXT8</accession>
<dbReference type="EMBL" id="OR128469">
    <property type="protein sequence ID" value="WMI02507.1"/>
    <property type="molecule type" value="mRNA"/>
</dbReference>
<dbReference type="GO" id="GO:0005576">
    <property type="term" value="C:extracellular region"/>
    <property type="evidence" value="ECO:0007669"/>
    <property type="project" value="UniProtKB-SubCell"/>
</dbReference>
<dbReference type="GO" id="GO:0090729">
    <property type="term" value="F:toxin activity"/>
    <property type="evidence" value="ECO:0007669"/>
    <property type="project" value="UniProtKB-KW"/>
</dbReference>
<keyword id="KW-0027">Amidation</keyword>
<keyword id="KW-0528">Neurotoxin</keyword>
<keyword id="KW-0964">Secreted</keyword>
<keyword id="KW-0732">Signal</keyword>
<keyword id="KW-0800">Toxin</keyword>
<comment type="function">
    <text evidence="1">Toxin that causes a rapid and irreversible paralysis when intrathoracically injected into insects (blowflies). Does not cause spontaneous nocifensive behaviors by intraplantar injection in mice.</text>
</comment>
<comment type="subcellular location">
    <subcellularLocation>
        <location evidence="5">Secreted</location>
    </subcellularLocation>
</comment>
<comment type="tissue specificity">
    <text evidence="5">Expressed by the venom gland.</text>
</comment>
<comment type="similarity">
    <text evidence="4">Belongs to the formicidae venom clade 2 family.</text>
</comment>
<evidence type="ECO:0000250" key="1">
    <source>
        <dbReference type="UniProtKB" id="P0DRD4"/>
    </source>
</evidence>
<evidence type="ECO:0000255" key="2"/>
<evidence type="ECO:0000303" key="3">
    <source>
    </source>
</evidence>
<evidence type="ECO:0000305" key="4"/>
<evidence type="ECO:0000305" key="5">
    <source>
    </source>
</evidence>
<protein>
    <recommendedName>
        <fullName evidence="3">Myrmicitoxin(1)-Pr4a</fullName>
        <shortName evidence="3">MYRTX(1)-Pr4a</shortName>
    </recommendedName>
</protein>
<sequence length="60" mass="6558">MKAIIFLFAVLTVVAIIIPIISGEPNAGPHAASIDLNEIMKKMRPDLLKMLDDIKTKIQG</sequence>
<feature type="signal peptide" evidence="2">
    <location>
        <begin position="1"/>
        <end position="23"/>
    </location>
</feature>
<feature type="propeptide" id="PRO_0000461257" evidence="5">
    <location>
        <begin position="24"/>
        <end position="33"/>
    </location>
</feature>
<feature type="peptide" id="PRO_0000461258" description="Myrmicitoxin(1)-Pr4a" evidence="1">
    <location>
        <begin position="34"/>
        <end position="59"/>
    </location>
</feature>
<feature type="modified residue" description="Glutamine amide" evidence="1">
    <location>
        <position position="59"/>
    </location>
</feature>
<organism>
    <name type="scientific">Pogonomyrmex rugosus</name>
    <name type="common">Desert harvester ant</name>
    <dbReference type="NCBI Taxonomy" id="144042"/>
    <lineage>
        <taxon>Eukaryota</taxon>
        <taxon>Metazoa</taxon>
        <taxon>Ecdysozoa</taxon>
        <taxon>Arthropoda</taxon>
        <taxon>Hexapoda</taxon>
        <taxon>Insecta</taxon>
        <taxon>Pterygota</taxon>
        <taxon>Neoptera</taxon>
        <taxon>Endopterygota</taxon>
        <taxon>Hymenoptera</taxon>
        <taxon>Apocrita</taxon>
        <taxon>Aculeata</taxon>
        <taxon>Formicoidea</taxon>
        <taxon>Formicidae</taxon>
        <taxon>Myrmicinae</taxon>
        <taxon>Pogonomyrmex</taxon>
    </lineage>
</organism>